<organism>
    <name type="scientific">Clostridium perfringens (strain 13 / Type A)</name>
    <dbReference type="NCBI Taxonomy" id="195102"/>
    <lineage>
        <taxon>Bacteria</taxon>
        <taxon>Bacillati</taxon>
        <taxon>Bacillota</taxon>
        <taxon>Clostridia</taxon>
        <taxon>Eubacteriales</taxon>
        <taxon>Clostridiaceae</taxon>
        <taxon>Clostridium</taxon>
    </lineage>
</organism>
<feature type="chain" id="PRO_0000112268" description="Carbamoyl phosphate synthase small chain">
    <location>
        <begin position="1"/>
        <end position="349"/>
    </location>
</feature>
<feature type="domain" description="Glutamine amidotransferase type-1" evidence="1">
    <location>
        <begin position="170"/>
        <end position="349"/>
    </location>
</feature>
<feature type="region of interest" description="CPSase" evidence="1">
    <location>
        <begin position="1"/>
        <end position="170"/>
    </location>
</feature>
<feature type="active site" description="Nucleophile" evidence="1">
    <location>
        <position position="245"/>
    </location>
</feature>
<feature type="active site" evidence="1">
    <location>
        <position position="327"/>
    </location>
</feature>
<feature type="active site" evidence="1">
    <location>
        <position position="329"/>
    </location>
</feature>
<feature type="binding site" evidence="1">
    <location>
        <position position="45"/>
    </location>
    <ligand>
        <name>L-glutamine</name>
        <dbReference type="ChEBI" id="CHEBI:58359"/>
    </ligand>
</feature>
<feature type="binding site" evidence="1">
    <location>
        <position position="218"/>
    </location>
    <ligand>
        <name>L-glutamine</name>
        <dbReference type="ChEBI" id="CHEBI:58359"/>
    </ligand>
</feature>
<feature type="binding site" evidence="1">
    <location>
        <position position="220"/>
    </location>
    <ligand>
        <name>L-glutamine</name>
        <dbReference type="ChEBI" id="CHEBI:58359"/>
    </ligand>
</feature>
<feature type="binding site" evidence="1">
    <location>
        <position position="246"/>
    </location>
    <ligand>
        <name>L-glutamine</name>
        <dbReference type="ChEBI" id="CHEBI:58359"/>
    </ligand>
</feature>
<feature type="binding site" evidence="1">
    <location>
        <position position="249"/>
    </location>
    <ligand>
        <name>L-glutamine</name>
        <dbReference type="ChEBI" id="CHEBI:58359"/>
    </ligand>
</feature>
<feature type="binding site" evidence="1">
    <location>
        <position position="287"/>
    </location>
    <ligand>
        <name>L-glutamine</name>
        <dbReference type="ChEBI" id="CHEBI:58359"/>
    </ligand>
</feature>
<feature type="binding site" evidence="1">
    <location>
        <position position="289"/>
    </location>
    <ligand>
        <name>L-glutamine</name>
        <dbReference type="ChEBI" id="CHEBI:58359"/>
    </ligand>
</feature>
<feature type="binding site" evidence="1">
    <location>
        <position position="290"/>
    </location>
    <ligand>
        <name>L-glutamine</name>
        <dbReference type="ChEBI" id="CHEBI:58359"/>
    </ligand>
</feature>
<dbReference type="EC" id="6.3.5.5" evidence="1"/>
<dbReference type="EMBL" id="BA000016">
    <property type="protein sequence ID" value="BAB82279.1"/>
    <property type="molecule type" value="Genomic_DNA"/>
</dbReference>
<dbReference type="RefSeq" id="WP_003450627.1">
    <property type="nucleotide sequence ID" value="NC_003366.1"/>
</dbReference>
<dbReference type="SMR" id="Q8XHB2"/>
<dbReference type="STRING" id="195102.gene:10491907"/>
<dbReference type="KEGG" id="cpe:CPE2573"/>
<dbReference type="HOGENOM" id="CLU_035901_2_1_9"/>
<dbReference type="UniPathway" id="UPA00068">
    <property type="reaction ID" value="UER00171"/>
</dbReference>
<dbReference type="UniPathway" id="UPA00070">
    <property type="reaction ID" value="UER00115"/>
</dbReference>
<dbReference type="Proteomes" id="UP000000818">
    <property type="component" value="Chromosome"/>
</dbReference>
<dbReference type="GO" id="GO:0005524">
    <property type="term" value="F:ATP binding"/>
    <property type="evidence" value="ECO:0007669"/>
    <property type="project" value="UniProtKB-UniRule"/>
</dbReference>
<dbReference type="GO" id="GO:0004088">
    <property type="term" value="F:carbamoyl-phosphate synthase (glutamine-hydrolyzing) activity"/>
    <property type="evidence" value="ECO:0007669"/>
    <property type="project" value="UniProtKB-UniRule"/>
</dbReference>
<dbReference type="GO" id="GO:0004359">
    <property type="term" value="F:glutaminase activity"/>
    <property type="evidence" value="ECO:0007669"/>
    <property type="project" value="RHEA"/>
</dbReference>
<dbReference type="GO" id="GO:0006207">
    <property type="term" value="P:'de novo' pyrimidine nucleobase biosynthetic process"/>
    <property type="evidence" value="ECO:0007669"/>
    <property type="project" value="InterPro"/>
</dbReference>
<dbReference type="GO" id="GO:0044205">
    <property type="term" value="P:'de novo' UMP biosynthetic process"/>
    <property type="evidence" value="ECO:0007669"/>
    <property type="project" value="UniProtKB-UniRule"/>
</dbReference>
<dbReference type="GO" id="GO:0006541">
    <property type="term" value="P:glutamine metabolic process"/>
    <property type="evidence" value="ECO:0007669"/>
    <property type="project" value="InterPro"/>
</dbReference>
<dbReference type="GO" id="GO:0006526">
    <property type="term" value="P:L-arginine biosynthetic process"/>
    <property type="evidence" value="ECO:0007669"/>
    <property type="project" value="UniProtKB-UniRule"/>
</dbReference>
<dbReference type="CDD" id="cd01744">
    <property type="entry name" value="GATase1_CPSase"/>
    <property type="match status" value="1"/>
</dbReference>
<dbReference type="FunFam" id="3.50.30.20:FF:000001">
    <property type="entry name" value="Carbamoyl-phosphate synthase small chain"/>
    <property type="match status" value="1"/>
</dbReference>
<dbReference type="Gene3D" id="3.40.50.880">
    <property type="match status" value="1"/>
</dbReference>
<dbReference type="Gene3D" id="3.50.30.20">
    <property type="entry name" value="Carbamoyl-phosphate synthase small subunit, N-terminal domain"/>
    <property type="match status" value="1"/>
</dbReference>
<dbReference type="HAMAP" id="MF_01209">
    <property type="entry name" value="CPSase_S_chain"/>
    <property type="match status" value="1"/>
</dbReference>
<dbReference type="InterPro" id="IPR050472">
    <property type="entry name" value="Anth_synth/Amidotransfase"/>
</dbReference>
<dbReference type="InterPro" id="IPR006274">
    <property type="entry name" value="CarbamoylP_synth_ssu"/>
</dbReference>
<dbReference type="InterPro" id="IPR002474">
    <property type="entry name" value="CarbamoylP_synth_ssu_N"/>
</dbReference>
<dbReference type="InterPro" id="IPR036480">
    <property type="entry name" value="CarbP_synth_ssu_N_sf"/>
</dbReference>
<dbReference type="InterPro" id="IPR029062">
    <property type="entry name" value="Class_I_gatase-like"/>
</dbReference>
<dbReference type="InterPro" id="IPR035686">
    <property type="entry name" value="CPSase_GATase1"/>
</dbReference>
<dbReference type="InterPro" id="IPR017926">
    <property type="entry name" value="GATASE"/>
</dbReference>
<dbReference type="NCBIfam" id="TIGR01368">
    <property type="entry name" value="CPSaseIIsmall"/>
    <property type="match status" value="1"/>
</dbReference>
<dbReference type="NCBIfam" id="NF009475">
    <property type="entry name" value="PRK12838.1"/>
    <property type="match status" value="1"/>
</dbReference>
<dbReference type="PANTHER" id="PTHR43418:SF7">
    <property type="entry name" value="CARBAMOYL-PHOSPHATE SYNTHASE SMALL CHAIN"/>
    <property type="match status" value="1"/>
</dbReference>
<dbReference type="PANTHER" id="PTHR43418">
    <property type="entry name" value="MULTIFUNCTIONAL TRYPTOPHAN BIOSYNTHESIS PROTEIN-RELATED"/>
    <property type="match status" value="1"/>
</dbReference>
<dbReference type="Pfam" id="PF00988">
    <property type="entry name" value="CPSase_sm_chain"/>
    <property type="match status" value="1"/>
</dbReference>
<dbReference type="Pfam" id="PF00117">
    <property type="entry name" value="GATase"/>
    <property type="match status" value="1"/>
</dbReference>
<dbReference type="PRINTS" id="PR00097">
    <property type="entry name" value="ANTSNTHASEII"/>
</dbReference>
<dbReference type="PRINTS" id="PR00099">
    <property type="entry name" value="CPSGATASE"/>
</dbReference>
<dbReference type="PRINTS" id="PR00096">
    <property type="entry name" value="GATASE"/>
</dbReference>
<dbReference type="SMART" id="SM01097">
    <property type="entry name" value="CPSase_sm_chain"/>
    <property type="match status" value="1"/>
</dbReference>
<dbReference type="SUPFAM" id="SSF52021">
    <property type="entry name" value="Carbamoyl phosphate synthetase, small subunit N-terminal domain"/>
    <property type="match status" value="1"/>
</dbReference>
<dbReference type="SUPFAM" id="SSF52317">
    <property type="entry name" value="Class I glutamine amidotransferase-like"/>
    <property type="match status" value="1"/>
</dbReference>
<dbReference type="PROSITE" id="PS51273">
    <property type="entry name" value="GATASE_TYPE_1"/>
    <property type="match status" value="1"/>
</dbReference>
<name>CARA_CLOPE</name>
<proteinExistence type="inferred from homology"/>
<reference key="1">
    <citation type="journal article" date="2002" name="Proc. Natl. Acad. Sci. U.S.A.">
        <title>Complete genome sequence of Clostridium perfringens, an anaerobic flesh-eater.</title>
        <authorList>
            <person name="Shimizu T."/>
            <person name="Ohtani K."/>
            <person name="Hirakawa H."/>
            <person name="Ohshima K."/>
            <person name="Yamashita A."/>
            <person name="Shiba T."/>
            <person name="Ogasawara N."/>
            <person name="Hattori M."/>
            <person name="Kuhara S."/>
            <person name="Hayashi H."/>
        </authorList>
    </citation>
    <scope>NUCLEOTIDE SEQUENCE [LARGE SCALE GENOMIC DNA]</scope>
    <source>
        <strain>13 / Type A</strain>
    </source>
</reference>
<accession>Q8XHB2</accession>
<gene>
    <name evidence="1" type="primary">carA</name>
    <name type="ordered locus">CPE2573</name>
</gene>
<comment type="function">
    <text evidence="1">Small subunit of the glutamine-dependent carbamoyl phosphate synthetase (CPSase). CPSase catalyzes the formation of carbamoyl phosphate from the ammonia moiety of glutamine, carbonate, and phosphate donated by ATP, constituting the first step of 2 biosynthetic pathways, one leading to arginine and/or urea and the other to pyrimidine nucleotides. The small subunit (glutamine amidotransferase) binds and cleaves glutamine to supply the large subunit with the substrate ammonia.</text>
</comment>
<comment type="catalytic activity">
    <reaction evidence="1">
        <text>hydrogencarbonate + L-glutamine + 2 ATP + H2O = carbamoyl phosphate + L-glutamate + 2 ADP + phosphate + 2 H(+)</text>
        <dbReference type="Rhea" id="RHEA:18633"/>
        <dbReference type="ChEBI" id="CHEBI:15377"/>
        <dbReference type="ChEBI" id="CHEBI:15378"/>
        <dbReference type="ChEBI" id="CHEBI:17544"/>
        <dbReference type="ChEBI" id="CHEBI:29985"/>
        <dbReference type="ChEBI" id="CHEBI:30616"/>
        <dbReference type="ChEBI" id="CHEBI:43474"/>
        <dbReference type="ChEBI" id="CHEBI:58228"/>
        <dbReference type="ChEBI" id="CHEBI:58359"/>
        <dbReference type="ChEBI" id="CHEBI:456216"/>
        <dbReference type="EC" id="6.3.5.5"/>
    </reaction>
</comment>
<comment type="catalytic activity">
    <molecule>Carbamoyl phosphate synthase small chain</molecule>
    <reaction evidence="1">
        <text>L-glutamine + H2O = L-glutamate + NH4(+)</text>
        <dbReference type="Rhea" id="RHEA:15889"/>
        <dbReference type="ChEBI" id="CHEBI:15377"/>
        <dbReference type="ChEBI" id="CHEBI:28938"/>
        <dbReference type="ChEBI" id="CHEBI:29985"/>
        <dbReference type="ChEBI" id="CHEBI:58359"/>
    </reaction>
</comment>
<comment type="pathway">
    <text evidence="1">Amino-acid biosynthesis; L-arginine biosynthesis; carbamoyl phosphate from bicarbonate: step 1/1.</text>
</comment>
<comment type="pathway">
    <text evidence="1">Pyrimidine metabolism; UMP biosynthesis via de novo pathway; (S)-dihydroorotate from bicarbonate: step 1/3.</text>
</comment>
<comment type="subunit">
    <text evidence="1">Composed of two chains; the small (or glutamine) chain promotes the hydrolysis of glutamine to ammonia, which is used by the large (or ammonia) chain to synthesize carbamoyl phosphate. Tetramer of heterodimers (alpha,beta)4.</text>
</comment>
<comment type="similarity">
    <text evidence="1">Belongs to the CarA family.</text>
</comment>
<evidence type="ECO:0000255" key="1">
    <source>
        <dbReference type="HAMAP-Rule" id="MF_01209"/>
    </source>
</evidence>
<keyword id="KW-0028">Amino-acid biosynthesis</keyword>
<keyword id="KW-0055">Arginine biosynthesis</keyword>
<keyword id="KW-0067">ATP-binding</keyword>
<keyword id="KW-0315">Glutamine amidotransferase</keyword>
<keyword id="KW-0436">Ligase</keyword>
<keyword id="KW-0547">Nucleotide-binding</keyword>
<keyword id="KW-0665">Pyrimidine biosynthesis</keyword>
<keyword id="KW-1185">Reference proteome</keyword>
<sequence length="349" mass="39083">MKAKLILENGVVFEGKAFGYLKECVGEVVFNTGMTGYQEVLTDPSYYGQIVTMTYPLIGNYGINLEDLESKEPKVRGFIVREKCQYPNNFRCELELETYLAQNKVLGLDGIDTRALTKILRNNGTMKGIIVLDNSNLEDVKDKLEAFSNRDAVSIVSTNEKYEISGEGKKVAIIDFGIKQNIIRNFVKRGCNVTVFPYDFKAEEVLEINPDLVFLSNGPGDPEDMGEAVNEIKKIVGKKPIVGICLGHQLLALTLGGETKKLKFGHRGCNHPVKDLINNRVHITSQNHGYYVATLPENMEITHVSMNDGTVEGMKHKELPIFSVQFHPEACPGPKDSEYIFDEFMKYAL</sequence>
<protein>
    <recommendedName>
        <fullName evidence="1">Carbamoyl phosphate synthase small chain</fullName>
        <ecNumber evidence="1">6.3.5.5</ecNumber>
    </recommendedName>
    <alternativeName>
        <fullName evidence="1">Carbamoyl phosphate synthetase glutamine chain</fullName>
    </alternativeName>
</protein>